<reference key="1">
    <citation type="journal article" date="1986" name="Mol. Cell. Biol.">
        <title>The MES-1 murine enhancer element is closely associated with the heterogeneous 5' ends of two divergent transcription units.</title>
        <authorList>
            <person name="Williams T.J."/>
            <person name="Fried M."/>
        </authorList>
    </citation>
    <scope>NUCLEOTIDE SEQUENCE [GENOMIC DNA]</scope>
</reference>
<reference key="2">
    <citation type="submission" date="1988-09" db="EMBL/GenBank/DDBJ databases">
        <authorList>
            <person name="Fried M."/>
        </authorList>
    </citation>
    <scope>SEQUENCE REVISION</scope>
</reference>
<reference key="3">
    <citation type="journal article" date="2005" name="Science">
        <title>The transcriptional landscape of the mammalian genome.</title>
        <authorList>
            <person name="Carninci P."/>
            <person name="Kasukawa T."/>
            <person name="Katayama S."/>
            <person name="Gough J."/>
            <person name="Frith M.C."/>
            <person name="Maeda N."/>
            <person name="Oyama R."/>
            <person name="Ravasi T."/>
            <person name="Lenhard B."/>
            <person name="Wells C."/>
            <person name="Kodzius R."/>
            <person name="Shimokawa K."/>
            <person name="Bajic V.B."/>
            <person name="Brenner S.E."/>
            <person name="Batalov S."/>
            <person name="Forrest A.R."/>
            <person name="Zavolan M."/>
            <person name="Davis M.J."/>
            <person name="Wilming L.G."/>
            <person name="Aidinis V."/>
            <person name="Allen J.E."/>
            <person name="Ambesi-Impiombato A."/>
            <person name="Apweiler R."/>
            <person name="Aturaliya R.N."/>
            <person name="Bailey T.L."/>
            <person name="Bansal M."/>
            <person name="Baxter L."/>
            <person name="Beisel K.W."/>
            <person name="Bersano T."/>
            <person name="Bono H."/>
            <person name="Chalk A.M."/>
            <person name="Chiu K.P."/>
            <person name="Choudhary V."/>
            <person name="Christoffels A."/>
            <person name="Clutterbuck D.R."/>
            <person name="Crowe M.L."/>
            <person name="Dalla E."/>
            <person name="Dalrymple B.P."/>
            <person name="de Bono B."/>
            <person name="Della Gatta G."/>
            <person name="di Bernardo D."/>
            <person name="Down T."/>
            <person name="Engstrom P."/>
            <person name="Fagiolini M."/>
            <person name="Faulkner G."/>
            <person name="Fletcher C.F."/>
            <person name="Fukushima T."/>
            <person name="Furuno M."/>
            <person name="Futaki S."/>
            <person name="Gariboldi M."/>
            <person name="Georgii-Hemming P."/>
            <person name="Gingeras T.R."/>
            <person name="Gojobori T."/>
            <person name="Green R.E."/>
            <person name="Gustincich S."/>
            <person name="Harbers M."/>
            <person name="Hayashi Y."/>
            <person name="Hensch T.K."/>
            <person name="Hirokawa N."/>
            <person name="Hill D."/>
            <person name="Huminiecki L."/>
            <person name="Iacono M."/>
            <person name="Ikeo K."/>
            <person name="Iwama A."/>
            <person name="Ishikawa T."/>
            <person name="Jakt M."/>
            <person name="Kanapin A."/>
            <person name="Katoh M."/>
            <person name="Kawasawa Y."/>
            <person name="Kelso J."/>
            <person name="Kitamura H."/>
            <person name="Kitano H."/>
            <person name="Kollias G."/>
            <person name="Krishnan S.P."/>
            <person name="Kruger A."/>
            <person name="Kummerfeld S.K."/>
            <person name="Kurochkin I.V."/>
            <person name="Lareau L.F."/>
            <person name="Lazarevic D."/>
            <person name="Lipovich L."/>
            <person name="Liu J."/>
            <person name="Liuni S."/>
            <person name="McWilliam S."/>
            <person name="Madan Babu M."/>
            <person name="Madera M."/>
            <person name="Marchionni L."/>
            <person name="Matsuda H."/>
            <person name="Matsuzawa S."/>
            <person name="Miki H."/>
            <person name="Mignone F."/>
            <person name="Miyake S."/>
            <person name="Morris K."/>
            <person name="Mottagui-Tabar S."/>
            <person name="Mulder N."/>
            <person name="Nakano N."/>
            <person name="Nakauchi H."/>
            <person name="Ng P."/>
            <person name="Nilsson R."/>
            <person name="Nishiguchi S."/>
            <person name="Nishikawa S."/>
            <person name="Nori F."/>
            <person name="Ohara O."/>
            <person name="Okazaki Y."/>
            <person name="Orlando V."/>
            <person name="Pang K.C."/>
            <person name="Pavan W.J."/>
            <person name="Pavesi G."/>
            <person name="Pesole G."/>
            <person name="Petrovsky N."/>
            <person name="Piazza S."/>
            <person name="Reed J."/>
            <person name="Reid J.F."/>
            <person name="Ring B.Z."/>
            <person name="Ringwald M."/>
            <person name="Rost B."/>
            <person name="Ruan Y."/>
            <person name="Salzberg S.L."/>
            <person name="Sandelin A."/>
            <person name="Schneider C."/>
            <person name="Schoenbach C."/>
            <person name="Sekiguchi K."/>
            <person name="Semple C.A."/>
            <person name="Seno S."/>
            <person name="Sessa L."/>
            <person name="Sheng Y."/>
            <person name="Shibata Y."/>
            <person name="Shimada H."/>
            <person name="Shimada K."/>
            <person name="Silva D."/>
            <person name="Sinclair B."/>
            <person name="Sperling S."/>
            <person name="Stupka E."/>
            <person name="Sugiura K."/>
            <person name="Sultana R."/>
            <person name="Takenaka Y."/>
            <person name="Taki K."/>
            <person name="Tammoja K."/>
            <person name="Tan S.L."/>
            <person name="Tang S."/>
            <person name="Taylor M.S."/>
            <person name="Tegner J."/>
            <person name="Teichmann S.A."/>
            <person name="Ueda H.R."/>
            <person name="van Nimwegen E."/>
            <person name="Verardo R."/>
            <person name="Wei C.L."/>
            <person name="Yagi K."/>
            <person name="Yamanishi H."/>
            <person name="Zabarovsky E."/>
            <person name="Zhu S."/>
            <person name="Zimmer A."/>
            <person name="Hide W."/>
            <person name="Bult C."/>
            <person name="Grimmond S.M."/>
            <person name="Teasdale R.D."/>
            <person name="Liu E.T."/>
            <person name="Brusic V."/>
            <person name="Quackenbush J."/>
            <person name="Wahlestedt C."/>
            <person name="Mattick J.S."/>
            <person name="Hume D.A."/>
            <person name="Kai C."/>
            <person name="Sasaki D."/>
            <person name="Tomaru Y."/>
            <person name="Fukuda S."/>
            <person name="Kanamori-Katayama M."/>
            <person name="Suzuki M."/>
            <person name="Aoki J."/>
            <person name="Arakawa T."/>
            <person name="Iida J."/>
            <person name="Imamura K."/>
            <person name="Itoh M."/>
            <person name="Kato T."/>
            <person name="Kawaji H."/>
            <person name="Kawagashira N."/>
            <person name="Kawashima T."/>
            <person name="Kojima M."/>
            <person name="Kondo S."/>
            <person name="Konno H."/>
            <person name="Nakano K."/>
            <person name="Ninomiya N."/>
            <person name="Nishio T."/>
            <person name="Okada M."/>
            <person name="Plessy C."/>
            <person name="Shibata K."/>
            <person name="Shiraki T."/>
            <person name="Suzuki S."/>
            <person name="Tagami M."/>
            <person name="Waki K."/>
            <person name="Watahiki A."/>
            <person name="Okamura-Oho Y."/>
            <person name="Suzuki H."/>
            <person name="Kawai J."/>
            <person name="Hayashizaki Y."/>
        </authorList>
    </citation>
    <scope>NUCLEOTIDE SEQUENCE [LARGE SCALE MRNA]</scope>
    <source>
        <strain>C57BL/6J</strain>
        <tissue>Kidney</tissue>
    </source>
</reference>
<reference key="4">
    <citation type="journal article" date="2004" name="Genome Res.">
        <title>The status, quality, and expansion of the NIH full-length cDNA project: the Mammalian Gene Collection (MGC).</title>
        <authorList>
            <consortium name="The MGC Project Team"/>
        </authorList>
    </citation>
    <scope>NUCLEOTIDE SEQUENCE [LARGE SCALE MRNA]</scope>
</reference>
<reference key="5">
    <citation type="journal article" date="2007" name="Hum. Mol. Genet.">
        <title>Increased longevity and refractoriness to Ca(2+)-dependent neurodegeneration in Surf1 knockout mice.</title>
        <authorList>
            <person name="Dell'agnello C."/>
            <person name="Leo S."/>
            <person name="Agostino A."/>
            <person name="Szabadkai G."/>
            <person name="Tiveron C."/>
            <person name="Zulian A."/>
            <person name="Prelle A."/>
            <person name="Roubertoux P."/>
            <person name="Rizzuto R."/>
            <person name="Zeviani M."/>
        </authorList>
    </citation>
    <scope>FUNCTION</scope>
    <scope>SUBCELLULAR LOCATION</scope>
    <scope>DISRUPTION PHENOTYPE</scope>
</reference>
<reference key="6">
    <citation type="journal article" date="2010" name="Cell">
        <title>A tissue-specific atlas of mouse protein phosphorylation and expression.</title>
        <authorList>
            <person name="Huttlin E.L."/>
            <person name="Jedrychowski M.P."/>
            <person name="Elias J.E."/>
            <person name="Goswami T."/>
            <person name="Rad R."/>
            <person name="Beausoleil S.A."/>
            <person name="Villen J."/>
            <person name="Haas W."/>
            <person name="Sowa M.E."/>
            <person name="Gygi S.P."/>
        </authorList>
    </citation>
    <scope>IDENTIFICATION BY MASS SPECTROMETRY [LARGE SCALE ANALYSIS]</scope>
    <source>
        <tissue>Brown adipose tissue</tissue>
        <tissue>Heart</tissue>
        <tissue>Kidney</tissue>
        <tissue>Liver</tissue>
        <tissue>Lung</tissue>
        <tissue>Spleen</tissue>
        <tissue>Testis</tissue>
    </source>
</reference>
<reference key="7">
    <citation type="journal article" date="2011" name="Mitochondrion">
        <title>Hypoxic and hypercapnic challenges unveil respiratory vulnerability of Surf1 knockout mice, an animal model of Leigh syndrome.</title>
        <authorList>
            <person name="Stettner G.M."/>
            <person name="Viscomi C."/>
            <person name="Zeviani M."/>
            <person name="Wilichowski E."/>
            <person name="Dutschmann M."/>
        </authorList>
    </citation>
    <scope>DISRUPTION PHENOTYPE</scope>
</reference>
<reference key="8">
    <citation type="journal article" date="2013" name="J. Cereb. Blood Flow Metab.">
        <title>Decreased in vitro mitochondrial function is associated with enhanced brain metabolism, blood flow, and memory in Surf1-deficient mice.</title>
        <authorList>
            <person name="Lin A.L."/>
            <person name="Pulliam D.A."/>
            <person name="Deepa S.S."/>
            <person name="Halloran J.J."/>
            <person name="Hussong S.A."/>
            <person name="Burbank R.R."/>
            <person name="Bresnen A."/>
            <person name="Liu Y."/>
            <person name="Podlutskaya N."/>
            <person name="Soundararajan A."/>
            <person name="Muir E."/>
            <person name="Duong T.Q."/>
            <person name="Bokov A.F."/>
            <person name="Viscomi C."/>
            <person name="Zeviani M."/>
            <person name="Richardson A.G."/>
            <person name="Van Remmen H."/>
            <person name="Fox P.T."/>
            <person name="Galvan V."/>
        </authorList>
    </citation>
    <scope>FUNCTION</scope>
    <scope>DISRUPTION PHENOTYPE</scope>
</reference>
<reference key="9">
    <citation type="journal article" date="2014" name="Biochem. J.">
        <title>Complex IV-deficient Surf1(-/-) mice initiate mitochondrial stress responses.</title>
        <authorList>
            <person name="Pulliam D.A."/>
            <person name="Deepa S.S."/>
            <person name="Liu Y."/>
            <person name="Hill S."/>
            <person name="Lin A.L."/>
            <person name="Bhattacharya A."/>
            <person name="Shi Y."/>
            <person name="Sloane L."/>
            <person name="Viscomi C."/>
            <person name="Zeviani M."/>
            <person name="Van Remmen H."/>
        </authorList>
    </citation>
    <scope>FUNCTION</scope>
    <scope>DISRUPTION PHENOTYPE</scope>
</reference>
<gene>
    <name type="primary">Surf1</name>
    <name type="synonym">Surf-1</name>
</gene>
<protein>
    <recommendedName>
        <fullName>Surfeit locus protein 1</fullName>
    </recommendedName>
</protein>
<dbReference type="EMBL" id="M14689">
    <property type="protein sequence ID" value="AAA40153.1"/>
    <property type="molecule type" value="Genomic_DNA"/>
</dbReference>
<dbReference type="EMBL" id="AK002469">
    <property type="protein sequence ID" value="BAB22123.1"/>
    <property type="molecule type" value="mRNA"/>
</dbReference>
<dbReference type="EMBL" id="BC004755">
    <property type="protein sequence ID" value="AAH04755.1"/>
    <property type="molecule type" value="mRNA"/>
</dbReference>
<dbReference type="CCDS" id="CCDS50543.1"/>
<dbReference type="PIR" id="B25394">
    <property type="entry name" value="B25394"/>
</dbReference>
<dbReference type="RefSeq" id="NP_001258653.2">
    <property type="nucleotide sequence ID" value="NM_001271724.1"/>
</dbReference>
<dbReference type="RefSeq" id="NP_038705.2">
    <property type="nucleotide sequence ID" value="NM_013677.2"/>
</dbReference>
<dbReference type="SMR" id="P09925"/>
<dbReference type="BioGRID" id="203579">
    <property type="interactions" value="1"/>
</dbReference>
<dbReference type="FunCoup" id="P09925">
    <property type="interactions" value="1888"/>
</dbReference>
<dbReference type="STRING" id="10090.ENSMUSP00000015934"/>
<dbReference type="iPTMnet" id="P09925"/>
<dbReference type="PhosphoSitePlus" id="P09925"/>
<dbReference type="SwissPalm" id="P09925"/>
<dbReference type="jPOST" id="P09925"/>
<dbReference type="PaxDb" id="10090-ENSMUSP00000015934"/>
<dbReference type="ProteomicsDB" id="254781"/>
<dbReference type="Pumba" id="P09925"/>
<dbReference type="Antibodypedia" id="18363">
    <property type="antibodies" value="161 antibodies from 29 providers"/>
</dbReference>
<dbReference type="Ensembl" id="ENSMUST00000015934.13">
    <property type="protein sequence ID" value="ENSMUSP00000015934.8"/>
    <property type="gene ID" value="ENSMUSG00000015790.17"/>
</dbReference>
<dbReference type="GeneID" id="20930"/>
<dbReference type="KEGG" id="mmu:20930"/>
<dbReference type="UCSC" id="uc008iwh.2">
    <property type="organism name" value="mouse"/>
</dbReference>
<dbReference type="AGR" id="MGI:98443"/>
<dbReference type="CTD" id="6834"/>
<dbReference type="MGI" id="MGI:98443">
    <property type="gene designation" value="Surf1"/>
</dbReference>
<dbReference type="VEuPathDB" id="HostDB:ENSMUSG00000015790"/>
<dbReference type="eggNOG" id="KOG1563">
    <property type="taxonomic scope" value="Eukaryota"/>
</dbReference>
<dbReference type="GeneTree" id="ENSGT00530000064194"/>
<dbReference type="InParanoid" id="P09925"/>
<dbReference type="OMA" id="WYSRDVA"/>
<dbReference type="OrthoDB" id="42454at9989"/>
<dbReference type="Reactome" id="R-MMU-9864848">
    <property type="pathway name" value="Complex IV assembly"/>
</dbReference>
<dbReference type="BioGRID-ORCS" id="20930">
    <property type="hits" value="7 hits in 76 CRISPR screens"/>
</dbReference>
<dbReference type="ChiTaRS" id="Surf1">
    <property type="organism name" value="mouse"/>
</dbReference>
<dbReference type="PRO" id="PR:P09925"/>
<dbReference type="Proteomes" id="UP000000589">
    <property type="component" value="Chromosome 2"/>
</dbReference>
<dbReference type="RNAct" id="P09925">
    <property type="molecule type" value="protein"/>
</dbReference>
<dbReference type="Bgee" id="ENSMUSG00000015790">
    <property type="expression patterns" value="Expressed in facial nucleus and 254 other cell types or tissues"/>
</dbReference>
<dbReference type="ExpressionAtlas" id="P09925">
    <property type="expression patterns" value="baseline and differential"/>
</dbReference>
<dbReference type="GO" id="GO:0031966">
    <property type="term" value="C:mitochondrial membrane"/>
    <property type="evidence" value="ECO:0007669"/>
    <property type="project" value="UniProtKB-SubCell"/>
</dbReference>
<dbReference type="GO" id="GO:0005739">
    <property type="term" value="C:mitochondrion"/>
    <property type="evidence" value="ECO:0007005"/>
    <property type="project" value="MGI"/>
</dbReference>
<dbReference type="GO" id="GO:0004129">
    <property type="term" value="F:cytochrome-c oxidase activity"/>
    <property type="evidence" value="ECO:0000315"/>
    <property type="project" value="UniProtKB"/>
</dbReference>
<dbReference type="GO" id="GO:0033617">
    <property type="term" value="P:mitochondrial cytochrome c oxidase assembly"/>
    <property type="evidence" value="ECO:0000250"/>
    <property type="project" value="UniProtKB"/>
</dbReference>
<dbReference type="CDD" id="cd06662">
    <property type="entry name" value="SURF1"/>
    <property type="match status" value="1"/>
</dbReference>
<dbReference type="InterPro" id="IPR002994">
    <property type="entry name" value="Surf1/Shy1"/>
</dbReference>
<dbReference type="InterPro" id="IPR045214">
    <property type="entry name" value="Surf1/Surf4"/>
</dbReference>
<dbReference type="PANTHER" id="PTHR23427">
    <property type="entry name" value="SURFEIT LOCUS PROTEIN"/>
    <property type="match status" value="1"/>
</dbReference>
<dbReference type="PANTHER" id="PTHR23427:SF2">
    <property type="entry name" value="SURFEIT LOCUS PROTEIN 1"/>
    <property type="match status" value="1"/>
</dbReference>
<dbReference type="Pfam" id="PF02104">
    <property type="entry name" value="SURF1"/>
    <property type="match status" value="1"/>
</dbReference>
<dbReference type="PROSITE" id="PS50895">
    <property type="entry name" value="SURF1"/>
    <property type="match status" value="1"/>
</dbReference>
<organism>
    <name type="scientific">Mus musculus</name>
    <name type="common">Mouse</name>
    <dbReference type="NCBI Taxonomy" id="10090"/>
    <lineage>
        <taxon>Eukaryota</taxon>
        <taxon>Metazoa</taxon>
        <taxon>Chordata</taxon>
        <taxon>Craniata</taxon>
        <taxon>Vertebrata</taxon>
        <taxon>Euteleostomi</taxon>
        <taxon>Mammalia</taxon>
        <taxon>Eutheria</taxon>
        <taxon>Euarchontoglires</taxon>
        <taxon>Glires</taxon>
        <taxon>Rodentia</taxon>
        <taxon>Myomorpha</taxon>
        <taxon>Muroidea</taxon>
        <taxon>Muridae</taxon>
        <taxon>Murinae</taxon>
        <taxon>Mus</taxon>
        <taxon>Mus</taxon>
    </lineage>
</organism>
<keyword id="KW-0472">Membrane</keyword>
<keyword id="KW-0496">Mitochondrion</keyword>
<keyword id="KW-1185">Reference proteome</keyword>
<keyword id="KW-0812">Transmembrane</keyword>
<keyword id="KW-1133">Transmembrane helix</keyword>
<comment type="function">
    <text evidence="1 3 5 6">Component of the MITRAC (mitochondrial translation regulation assembly intermediate of cytochrome c oxidase complex) complex (By similarity). Regulates cytochrome c oxidase assembly (PubMed:17210671, PubMed:23838831, PubMed:24911525).</text>
</comment>
<comment type="subunit">
    <text evidence="1">Component of the MITRAC (mitochondrial translation regulation assembly intermediate of cytochrome c oxidase complex) complex, the core components of this complex being COA3/MITRAC12 and COX14. Interacts with COA3.</text>
</comment>
<comment type="subcellular location">
    <subcellularLocation>
        <location evidence="3">Mitochondrion membrane</location>
        <topology evidence="2">Multi-pass membrane protein</topology>
    </subcellularLocation>
</comment>
<comment type="disruption phenotype">
    <text evidence="3 4 5 6">Results in smaller animals with mild decreased motor skills, enhanced working spatial and recognition memory, and increased longevity (PubMed:17210671, PubMed:23838831, PubMed:24911525). Increases global and regional cerebral blood flow (PubMed:23838831). Increases lactate levels in blood and brain, and increases glucose consumption in the brain (PubMed:17210671, PubMed:23838831, PubMed:24911525). Increases hydrogen peroxide production and succinate dehydrogenase (SDH) activity, but decreases COX activity and respiration (PubMed:17210671, PubMed:21167962, PubMed:23838831, PubMed:24911525). In the brain, increases Hif1a and phosphorylated cyclic AMP response element-binding protein levels (PubMed:23838831). In the brain, increases resistance to calcium-related excitotoxic brain damage (PubMed:17210671). In skeletal muscles, results in mitochondrial unfolded protein response (PubMed:24911525). In the heart, results in elevated Nfe2l2 and Hmox1 expression (PubMed:24911525). Primary cultures of mutant neuronal cells show reduced sensitivity to glutamate-induced cytosolic calcium signal and impaired mitochondrial calcium uptake without changing the mitochondrial structure and membrane potential (PubMed:17210671). Primary cultures of phrenic and central vagus nerves show increased respiratory frequency and altered response to systemic hypoxia and hypercapnia (PubMed:21167962).</text>
</comment>
<comment type="similarity">
    <text evidence="7">Belongs to the SURF1 family.</text>
</comment>
<name>SURF1_MOUSE</name>
<proteinExistence type="evidence at protein level"/>
<feature type="chain" id="PRO_0000215653" description="Surfeit locus protein 1">
    <location>
        <begin position="1"/>
        <end position="306"/>
    </location>
</feature>
<feature type="transmembrane region" description="Helical" evidence="2">
    <location>
        <begin position="68"/>
        <end position="86"/>
    </location>
</feature>
<feature type="transmembrane region" description="Helical" evidence="2">
    <location>
        <begin position="280"/>
        <end position="300"/>
    </location>
</feature>
<feature type="sequence conflict" description="In Ref. 1; AAA40153." evidence="7" ref="1">
    <original>V</original>
    <variation>G</variation>
    <location>
        <position position="9"/>
    </location>
</feature>
<feature type="sequence conflict" description="In Ref. 3; BAB22123." evidence="7" ref="3">
    <original>M</original>
    <variation>I</variation>
    <location>
        <position position="14"/>
    </location>
</feature>
<feature type="sequence conflict" description="In Ref. 1; AAA40153." evidence="7" ref="1">
    <original>W</original>
    <variation>CR</variation>
    <location>
        <position position="284"/>
    </location>
</feature>
<evidence type="ECO:0000250" key="1">
    <source>
        <dbReference type="UniProtKB" id="Q15526"/>
    </source>
</evidence>
<evidence type="ECO:0000255" key="2"/>
<evidence type="ECO:0000269" key="3">
    <source>
    </source>
</evidence>
<evidence type="ECO:0000269" key="4">
    <source>
    </source>
</evidence>
<evidence type="ECO:0000269" key="5">
    <source>
    </source>
</evidence>
<evidence type="ECO:0000269" key="6">
    <source>
    </source>
</evidence>
<evidence type="ECO:0000305" key="7"/>
<accession>P09925</accession>
<accession>Q99KB4</accession>
<accession>Q9DCU5</accession>
<sequence>MAAVMALAVLPRRMTRWSQWAYAGRAQFCAVRRSVFGFSVRSGMVCRPRRCCSSTAETAAAKAEDDSFLQWFLLLIPATAFGLGTWQVQRRKWKLKLIAELESRVMAEPIPLPADPMELKNLEYRPVKVRGHFDHSKELYIMPRTMVDPVREARDAGRLSSTESGAHVVTPFHCSDLGVTILVNRGFVPRKKVNPETRQKGQVLGEVDLVGIVRLTENRKPFVPENSPERNHWYYRDLEAMAKITGADPIFIDADFHSTAPGGPIGGQTRVTLRNEHMQYILTWYGLCAATSYLWFQKFVRRTPIM</sequence>